<feature type="chain" id="PRO_0000325119" description="Shikimate dehydrogenase (NADP(+))">
    <location>
        <begin position="1"/>
        <end position="279"/>
    </location>
</feature>
<feature type="active site" description="Proton acceptor" evidence="1">
    <location>
        <position position="70"/>
    </location>
</feature>
<feature type="binding site" evidence="1">
    <location>
        <begin position="19"/>
        <end position="21"/>
    </location>
    <ligand>
        <name>shikimate</name>
        <dbReference type="ChEBI" id="CHEBI:36208"/>
    </ligand>
</feature>
<feature type="binding site" evidence="1">
    <location>
        <position position="66"/>
    </location>
    <ligand>
        <name>shikimate</name>
        <dbReference type="ChEBI" id="CHEBI:36208"/>
    </ligand>
</feature>
<feature type="binding site" evidence="1">
    <location>
        <position position="91"/>
    </location>
    <ligand>
        <name>shikimate</name>
        <dbReference type="ChEBI" id="CHEBI:36208"/>
    </ligand>
</feature>
<feature type="binding site" evidence="1">
    <location>
        <position position="106"/>
    </location>
    <ligand>
        <name>shikimate</name>
        <dbReference type="ChEBI" id="CHEBI:36208"/>
    </ligand>
</feature>
<feature type="binding site" evidence="1">
    <location>
        <begin position="129"/>
        <end position="133"/>
    </location>
    <ligand>
        <name>NADP(+)</name>
        <dbReference type="ChEBI" id="CHEBI:58349"/>
    </ligand>
</feature>
<feature type="binding site" evidence="1">
    <location>
        <begin position="152"/>
        <end position="157"/>
    </location>
    <ligand>
        <name>NADP(+)</name>
        <dbReference type="ChEBI" id="CHEBI:58349"/>
    </ligand>
</feature>
<feature type="binding site" evidence="1">
    <location>
        <position position="218"/>
    </location>
    <ligand>
        <name>NADP(+)</name>
        <dbReference type="ChEBI" id="CHEBI:58349"/>
    </ligand>
</feature>
<feature type="binding site" evidence="1">
    <location>
        <position position="220"/>
    </location>
    <ligand>
        <name>shikimate</name>
        <dbReference type="ChEBI" id="CHEBI:36208"/>
    </ligand>
</feature>
<feature type="binding site" evidence="1">
    <location>
        <position position="241"/>
    </location>
    <ligand>
        <name>NADP(+)</name>
        <dbReference type="ChEBI" id="CHEBI:58349"/>
    </ligand>
</feature>
<keyword id="KW-0028">Amino-acid biosynthesis</keyword>
<keyword id="KW-0057">Aromatic amino acid biosynthesis</keyword>
<keyword id="KW-0521">NADP</keyword>
<keyword id="KW-0560">Oxidoreductase</keyword>
<keyword id="KW-1185">Reference proteome</keyword>
<sequence length="279" mass="29117">MIDGHTKLAGVMGWPVEHSRSPLMHNHWCRVNGVNGAYVPLPTHPHGFDQALRGLAAAGFQGVNVTIPHKEAAMLACDELTPTAKRAGAVNTICFVAGRIIGDCTDGTGFCDNLSAHDVAIAGRAMVLGAGGAARAVAAALLDRGCEVVIANRTLERAEALVEALGGGEAVAWYEWPSLLSGCSLLVNATSMGMGGKAGLDWDAALREAAPGLCVTDIVYTPRETPLLLAAQARGLRTVDGLGMLVHQARAGFRAWFGVDPQADRTTFDLLAASLRTDA</sequence>
<accession>Q5FPK1</accession>
<protein>
    <recommendedName>
        <fullName evidence="1">Shikimate dehydrogenase (NADP(+))</fullName>
        <shortName evidence="1">SDH</shortName>
        <ecNumber evidence="1">1.1.1.25</ecNumber>
    </recommendedName>
</protein>
<comment type="function">
    <text evidence="1">Involved in the biosynthesis of the chorismate, which leads to the biosynthesis of aromatic amino acids. Catalyzes the reversible NADPH linked reduction of 3-dehydroshikimate (DHSA) to yield shikimate (SA).</text>
</comment>
<comment type="catalytic activity">
    <reaction evidence="1">
        <text>shikimate + NADP(+) = 3-dehydroshikimate + NADPH + H(+)</text>
        <dbReference type="Rhea" id="RHEA:17737"/>
        <dbReference type="ChEBI" id="CHEBI:15378"/>
        <dbReference type="ChEBI" id="CHEBI:16630"/>
        <dbReference type="ChEBI" id="CHEBI:36208"/>
        <dbReference type="ChEBI" id="CHEBI:57783"/>
        <dbReference type="ChEBI" id="CHEBI:58349"/>
        <dbReference type="EC" id="1.1.1.25"/>
    </reaction>
</comment>
<comment type="pathway">
    <text evidence="1">Metabolic intermediate biosynthesis; chorismate biosynthesis; chorismate from D-erythrose 4-phosphate and phosphoenolpyruvate: step 4/7.</text>
</comment>
<comment type="subunit">
    <text evidence="1">Homodimer.</text>
</comment>
<comment type="similarity">
    <text evidence="1">Belongs to the shikimate dehydrogenase family.</text>
</comment>
<proteinExistence type="inferred from homology"/>
<reference key="1">
    <citation type="journal article" date="2005" name="Nat. Biotechnol.">
        <title>Complete genome sequence of the acetic acid bacterium Gluconobacter oxydans.</title>
        <authorList>
            <person name="Prust C."/>
            <person name="Hoffmeister M."/>
            <person name="Liesegang H."/>
            <person name="Wiezer A."/>
            <person name="Fricke W.F."/>
            <person name="Ehrenreich A."/>
            <person name="Gottschalk G."/>
            <person name="Deppenmeier U."/>
        </authorList>
    </citation>
    <scope>NUCLEOTIDE SEQUENCE [LARGE SCALE GENOMIC DNA]</scope>
    <source>
        <strain>621H</strain>
    </source>
</reference>
<evidence type="ECO:0000255" key="1">
    <source>
        <dbReference type="HAMAP-Rule" id="MF_00222"/>
    </source>
</evidence>
<gene>
    <name evidence="1" type="primary">aroE</name>
    <name type="ordered locus">GOX1959</name>
</gene>
<dbReference type="EC" id="1.1.1.25" evidence="1"/>
<dbReference type="EMBL" id="CP000009">
    <property type="protein sequence ID" value="AAW61695.1"/>
    <property type="molecule type" value="Genomic_DNA"/>
</dbReference>
<dbReference type="RefSeq" id="WP_011253472.1">
    <property type="nucleotide sequence ID" value="NC_006677.1"/>
</dbReference>
<dbReference type="SMR" id="Q5FPK1"/>
<dbReference type="STRING" id="290633.GOX1959"/>
<dbReference type="KEGG" id="gox:GOX1959"/>
<dbReference type="eggNOG" id="COG0169">
    <property type="taxonomic scope" value="Bacteria"/>
</dbReference>
<dbReference type="HOGENOM" id="CLU_044063_2_0_5"/>
<dbReference type="UniPathway" id="UPA00053">
    <property type="reaction ID" value="UER00087"/>
</dbReference>
<dbReference type="Proteomes" id="UP000006375">
    <property type="component" value="Chromosome"/>
</dbReference>
<dbReference type="GO" id="GO:0005829">
    <property type="term" value="C:cytosol"/>
    <property type="evidence" value="ECO:0007669"/>
    <property type="project" value="TreeGrafter"/>
</dbReference>
<dbReference type="GO" id="GO:0050661">
    <property type="term" value="F:NADP binding"/>
    <property type="evidence" value="ECO:0007669"/>
    <property type="project" value="InterPro"/>
</dbReference>
<dbReference type="GO" id="GO:0004764">
    <property type="term" value="F:shikimate 3-dehydrogenase (NADP+) activity"/>
    <property type="evidence" value="ECO:0007669"/>
    <property type="project" value="UniProtKB-UniRule"/>
</dbReference>
<dbReference type="GO" id="GO:0008652">
    <property type="term" value="P:amino acid biosynthetic process"/>
    <property type="evidence" value="ECO:0007669"/>
    <property type="project" value="UniProtKB-KW"/>
</dbReference>
<dbReference type="GO" id="GO:0009073">
    <property type="term" value="P:aromatic amino acid family biosynthetic process"/>
    <property type="evidence" value="ECO:0007669"/>
    <property type="project" value="UniProtKB-KW"/>
</dbReference>
<dbReference type="GO" id="GO:0009423">
    <property type="term" value="P:chorismate biosynthetic process"/>
    <property type="evidence" value="ECO:0007669"/>
    <property type="project" value="UniProtKB-UniRule"/>
</dbReference>
<dbReference type="GO" id="GO:0019632">
    <property type="term" value="P:shikimate metabolic process"/>
    <property type="evidence" value="ECO:0007669"/>
    <property type="project" value="InterPro"/>
</dbReference>
<dbReference type="CDD" id="cd01065">
    <property type="entry name" value="NAD_bind_Shikimate_DH"/>
    <property type="match status" value="1"/>
</dbReference>
<dbReference type="Gene3D" id="3.40.50.10860">
    <property type="entry name" value="Leucine Dehydrogenase, chain A, domain 1"/>
    <property type="match status" value="1"/>
</dbReference>
<dbReference type="Gene3D" id="3.40.50.720">
    <property type="entry name" value="NAD(P)-binding Rossmann-like Domain"/>
    <property type="match status" value="1"/>
</dbReference>
<dbReference type="HAMAP" id="MF_00222">
    <property type="entry name" value="Shikimate_DH_AroE"/>
    <property type="match status" value="1"/>
</dbReference>
<dbReference type="InterPro" id="IPR046346">
    <property type="entry name" value="Aminoacid_DH-like_N_sf"/>
</dbReference>
<dbReference type="InterPro" id="IPR036291">
    <property type="entry name" value="NAD(P)-bd_dom_sf"/>
</dbReference>
<dbReference type="InterPro" id="IPR041121">
    <property type="entry name" value="SDH_C"/>
</dbReference>
<dbReference type="InterPro" id="IPR011342">
    <property type="entry name" value="Shikimate_DH"/>
</dbReference>
<dbReference type="InterPro" id="IPR013708">
    <property type="entry name" value="Shikimate_DH-bd_N"/>
</dbReference>
<dbReference type="InterPro" id="IPR022893">
    <property type="entry name" value="Shikimate_DH_fam"/>
</dbReference>
<dbReference type="InterPro" id="IPR006151">
    <property type="entry name" value="Shikm_DH/Glu-tRNA_Rdtase"/>
</dbReference>
<dbReference type="NCBIfam" id="TIGR00507">
    <property type="entry name" value="aroE"/>
    <property type="match status" value="1"/>
</dbReference>
<dbReference type="NCBIfam" id="NF001312">
    <property type="entry name" value="PRK00258.1-4"/>
    <property type="match status" value="1"/>
</dbReference>
<dbReference type="PANTHER" id="PTHR21089:SF1">
    <property type="entry name" value="BIFUNCTIONAL 3-DEHYDROQUINATE DEHYDRATASE_SHIKIMATE DEHYDROGENASE, CHLOROPLASTIC"/>
    <property type="match status" value="1"/>
</dbReference>
<dbReference type="PANTHER" id="PTHR21089">
    <property type="entry name" value="SHIKIMATE DEHYDROGENASE"/>
    <property type="match status" value="1"/>
</dbReference>
<dbReference type="Pfam" id="PF18317">
    <property type="entry name" value="SDH_C"/>
    <property type="match status" value="1"/>
</dbReference>
<dbReference type="Pfam" id="PF01488">
    <property type="entry name" value="Shikimate_DH"/>
    <property type="match status" value="1"/>
</dbReference>
<dbReference type="Pfam" id="PF08501">
    <property type="entry name" value="Shikimate_dh_N"/>
    <property type="match status" value="1"/>
</dbReference>
<dbReference type="SUPFAM" id="SSF53223">
    <property type="entry name" value="Aminoacid dehydrogenase-like, N-terminal domain"/>
    <property type="match status" value="1"/>
</dbReference>
<dbReference type="SUPFAM" id="SSF51735">
    <property type="entry name" value="NAD(P)-binding Rossmann-fold domains"/>
    <property type="match status" value="1"/>
</dbReference>
<name>AROE_GLUOX</name>
<organism>
    <name type="scientific">Gluconobacter oxydans (strain 621H)</name>
    <name type="common">Gluconobacter suboxydans</name>
    <dbReference type="NCBI Taxonomy" id="290633"/>
    <lineage>
        <taxon>Bacteria</taxon>
        <taxon>Pseudomonadati</taxon>
        <taxon>Pseudomonadota</taxon>
        <taxon>Alphaproteobacteria</taxon>
        <taxon>Acetobacterales</taxon>
        <taxon>Acetobacteraceae</taxon>
        <taxon>Gluconobacter</taxon>
    </lineage>
</organism>